<gene>
    <name evidence="6" type="primary">igtZ</name>
</gene>
<proteinExistence type="evidence at protein level"/>
<reference key="1">
    <citation type="journal article" date="2006" name="Biosci. Biotechnol. Biochem.">
        <title>Cloning, sequencing, and expression of the genes encoding an isocyclomaltooligosaccharide glucanotransferase and an alpha-amylase from a Bacillus circulans strain.</title>
        <authorList>
            <person name="Watanabe H."/>
            <person name="Nishimoto T."/>
            <person name="Kubota M."/>
            <person name="Chaen H."/>
            <person name="Fukuda S."/>
        </authorList>
    </citation>
    <scope>NUCLEOTIDE SEQUENCE [GENOMIC DNA]</scope>
    <scope>PROTEIN SEQUENCE OF 32-37</scope>
    <scope>FUNCTION</scope>
    <scope>CATALYTIC ACTIVITY</scope>
    <scope>SUBSTRATE SPECIFICITY</scope>
    <scope>BIOPHYSICOCHEMICAL PROPERTIES</scope>
    <source>
        <strain>AM7</strain>
    </source>
</reference>
<reference key="2">
    <citation type="journal article" date="2012" name="FEBS Lett.">
        <title>In silico identification of catalytic residues and domain fold of the family GH119 sharing the catalytic machinery with the alpha-amylase family GH57.</title>
        <authorList>
            <person name="Janecek S."/>
            <person name="Kuchtova A."/>
        </authorList>
    </citation>
    <scope>3D-STRUCTURE MODELING</scope>
    <scope>ACTIVE SITE</scope>
</reference>
<evidence type="ECO:0000255" key="1"/>
<evidence type="ECO:0000255" key="2">
    <source>
        <dbReference type="PROSITE-ProRule" id="PRU00316"/>
    </source>
</evidence>
<evidence type="ECO:0000255" key="3">
    <source>
        <dbReference type="PROSITE-ProRule" id="PRU00594"/>
    </source>
</evidence>
<evidence type="ECO:0000256" key="4">
    <source>
        <dbReference type="SAM" id="MobiDB-lite"/>
    </source>
</evidence>
<evidence type="ECO:0000269" key="5">
    <source>
    </source>
</evidence>
<evidence type="ECO:0000303" key="6">
    <source>
    </source>
</evidence>
<evidence type="ECO:0000305" key="7"/>
<evidence type="ECO:0000305" key="8">
    <source>
    </source>
</evidence>
<organism>
    <name type="scientific">Niallia circulans</name>
    <name type="common">Bacillus circulans</name>
    <dbReference type="NCBI Taxonomy" id="1397"/>
    <lineage>
        <taxon>Bacteria</taxon>
        <taxon>Bacillati</taxon>
        <taxon>Bacillota</taxon>
        <taxon>Bacilli</taxon>
        <taxon>Bacillales</taxon>
        <taxon>Bacillaceae</taxon>
        <taxon>Niallia</taxon>
    </lineage>
</organism>
<dbReference type="EC" id="3.2.1.1" evidence="5"/>
<dbReference type="EMBL" id="AB248273">
    <property type="protein sequence ID" value="BAF37284.1"/>
    <property type="molecule type" value="Genomic_DNA"/>
</dbReference>
<dbReference type="SMR" id="A0P8X0"/>
<dbReference type="CAZy" id="CBM20">
    <property type="family name" value="Carbohydrate-Binding Module Family 20"/>
</dbReference>
<dbReference type="CAZy" id="CBM25">
    <property type="family name" value="Carbohydrate-Binding Module Family 25"/>
</dbReference>
<dbReference type="CAZy" id="GH119">
    <property type="family name" value="Glycoside Hydrolase Family 119"/>
</dbReference>
<dbReference type="GO" id="GO:0005576">
    <property type="term" value="C:extracellular region"/>
    <property type="evidence" value="ECO:0007669"/>
    <property type="project" value="UniProtKB-SubCell"/>
</dbReference>
<dbReference type="GO" id="GO:0004556">
    <property type="term" value="F:alpha-amylase activity"/>
    <property type="evidence" value="ECO:0000314"/>
    <property type="project" value="UniProtKB"/>
</dbReference>
<dbReference type="GO" id="GO:2001070">
    <property type="term" value="F:starch binding"/>
    <property type="evidence" value="ECO:0007669"/>
    <property type="project" value="InterPro"/>
</dbReference>
<dbReference type="GO" id="GO:0005983">
    <property type="term" value="P:starch catabolic process"/>
    <property type="evidence" value="ECO:0000314"/>
    <property type="project" value="UniProtKB"/>
</dbReference>
<dbReference type="CDD" id="cd00063">
    <property type="entry name" value="FN3"/>
    <property type="match status" value="1"/>
</dbReference>
<dbReference type="CDD" id="cd11663">
    <property type="entry name" value="GH119_BcIgtZ-like"/>
    <property type="match status" value="1"/>
</dbReference>
<dbReference type="FunFam" id="2.60.40.10:FF:001114">
    <property type="entry name" value="Chitinase A1"/>
    <property type="match status" value="1"/>
</dbReference>
<dbReference type="FunFam" id="2.60.40.10:FF:002433">
    <property type="entry name" value="Secreted alpha-amylase"/>
    <property type="match status" value="1"/>
</dbReference>
<dbReference type="Gene3D" id="2.60.40.10">
    <property type="entry name" value="Immunoglobulins"/>
    <property type="match status" value="4"/>
</dbReference>
<dbReference type="InterPro" id="IPR013784">
    <property type="entry name" value="Carb-bd-like_fold"/>
</dbReference>
<dbReference type="InterPro" id="IPR002044">
    <property type="entry name" value="CBM20"/>
</dbReference>
<dbReference type="InterPro" id="IPR005085">
    <property type="entry name" value="CBM25"/>
</dbReference>
<dbReference type="InterPro" id="IPR003961">
    <property type="entry name" value="FN3_dom"/>
</dbReference>
<dbReference type="InterPro" id="IPR036116">
    <property type="entry name" value="FN3_sf"/>
</dbReference>
<dbReference type="InterPro" id="IPR011330">
    <property type="entry name" value="Glyco_hydro/deAcase_b/a-brl"/>
</dbReference>
<dbReference type="InterPro" id="IPR013783">
    <property type="entry name" value="Ig-like_fold"/>
</dbReference>
<dbReference type="Pfam" id="PF03423">
    <property type="entry name" value="CBM_25"/>
    <property type="match status" value="2"/>
</dbReference>
<dbReference type="Pfam" id="PF00041">
    <property type="entry name" value="fn3"/>
    <property type="match status" value="1"/>
</dbReference>
<dbReference type="SMART" id="SM01065">
    <property type="entry name" value="CBM_2"/>
    <property type="match status" value="1"/>
</dbReference>
<dbReference type="SMART" id="SM01066">
    <property type="entry name" value="CBM_25"/>
    <property type="match status" value="2"/>
</dbReference>
<dbReference type="SMART" id="SM00060">
    <property type="entry name" value="FN3"/>
    <property type="match status" value="1"/>
</dbReference>
<dbReference type="SUPFAM" id="SSF49265">
    <property type="entry name" value="Fibronectin type III"/>
    <property type="match status" value="1"/>
</dbReference>
<dbReference type="SUPFAM" id="SSF88713">
    <property type="entry name" value="Glycoside hydrolase/deacetylase"/>
    <property type="match status" value="1"/>
</dbReference>
<dbReference type="SUPFAM" id="SSF49452">
    <property type="entry name" value="Starch-binding domain-like"/>
    <property type="match status" value="1"/>
</dbReference>
<dbReference type="PROSITE" id="PS51166">
    <property type="entry name" value="CBM20"/>
    <property type="match status" value="1"/>
</dbReference>
<dbReference type="PROSITE" id="PS50853">
    <property type="entry name" value="FN3"/>
    <property type="match status" value="1"/>
</dbReference>
<keyword id="KW-0119">Carbohydrate metabolism</keyword>
<keyword id="KW-0903">Direct protein sequencing</keyword>
<keyword id="KW-0326">Glycosidase</keyword>
<keyword id="KW-0378">Hydrolase</keyword>
<keyword id="KW-0624">Polysaccharide degradation</keyword>
<keyword id="KW-0677">Repeat</keyword>
<keyword id="KW-0964">Secreted</keyword>
<keyword id="KW-0732">Signal</keyword>
<comment type="function">
    <text evidence="5">Acts on maltooligosaccharides that have a degree of polymerization (DP) of 4 or more, amylose, and soluble or raw starch to produce glucose and maltooligosaccharides up to DP5 by a hydrolysis reaction. Also acts on maltooligosyl trehaloses that have DP5 or more to produce trehalose as the major hydrolysis product.</text>
</comment>
<comment type="catalytic activity">
    <reaction evidence="5">
        <text>Endohydrolysis of (1-&gt;4)-alpha-D-glucosidic linkages in polysaccharides containing three or more (1-&gt;4)-alpha-linked D-glucose units.</text>
        <dbReference type="EC" id="3.2.1.1"/>
    </reaction>
</comment>
<comment type="biophysicochemical properties">
    <phDependence>
        <text evidence="5">Optimum pH is 6.0.</text>
    </phDependence>
    <temperatureDependence>
        <text evidence="5">Optimum temperature is 40 degrees Celsius.</text>
    </temperatureDependence>
</comment>
<comment type="subcellular location">
    <subcellularLocation>
        <location evidence="7">Secreted</location>
    </subcellularLocation>
</comment>
<comment type="similarity">
    <text evidence="7">Belongs to the glycosyl hydrolase 119 (GH119) family.</text>
</comment>
<protein>
    <recommendedName>
        <fullName evidence="6">Alpha-amylase</fullName>
        <ecNumber evidence="5">3.2.1.1</ecNumber>
    </recommendedName>
</protein>
<sequence length="1290" mass="138787">MTRKTRYLHQITTLILGGLLIVPAAAPPVSADIAATHVYHNHMPNFWAYYDLNTYNSTPVGSPIRYTYDGEVIQLKQNPPAGYPYYLPNGSPMPHDDLVSYYSHHAKTGAYLTWPWSVANTLHSSHPQAQMHVTMSGSVVNNVNSIIQQGNVSGYNNPAWGTPWKNAVTQLKTAGGDNRLDLIHFSGHHSMGPLVGNDYLLKDMIYHGATMAQPYFLGSSYKSSKGFFPTELGFSERIIPVLNKLGIQWSVIGNNHFSRTLKDYPLLDSPGTDTMISPPNRSDLQNVSTAGAWVNEPMFNEQQVVYNKYPFASTAHWVRYVDPATGAESRVVGVPVAQAQSWEEGYLGQVKADALKPYENLVAQKQIFVVAHDGDNSSGRAGSEETWRNAGNVTYADSGVTGMGIDEYLRSNTPAAADVVHVQDGSWIDTRDSSSDPAWYHWHLPFGIWKGQFAAFNQVNGTAYAPKKNLAGVEEGMTVSFEKGYHYLERNFALLQASLNYAKTAEQIWLEEHPNYWKPANPLDREVTYEGNQLNPWMLSYPVKGNPANDYAGGANPAELAWYFLLPAMDSGFGYYDENVDDSVKPALSFNQSLYFSKPYVSQKLAKDKTGPSVWWPQRYPYNPGSANVSKAEGWTLQHYNNAFAIYTYAFDTSGISEIKVKVRAHRDKTADAADNTFKVYDPAGLAAAGIANIDPAKVGAWTEYPMNVRDLSADINGVDWQPSSMTIMQKVPATDIGNLYFSYISDYRDQLLDYFIEAKDAKGNVTQSDIQQVYVGAGKYKLANGKYTESMQGTIEGTHPFITDVPAVPDTEAPAVPANLQATVMNASSVGLSWNAATDNIRVTGYEIYRNGVRIGTTPSTSYTDSGLSASTAYEYRVKAYDASGNLSGFSAAATATTPAGNHVTVYYKQGYSTPYIHYRPAGGTWTTAPGVAIPAAEVAGYNKITINIGAATQLEACFNNGSGTWDSNGGSNYLFGTGTWTYTPTGKIQAGAPVAPSATPTVAPTATPTPKPSVTPTVTPITTPTVAPTLSPTPTVAPTVKPSATPIATPTVTPTVSPTATPTVVPTIAPTATPTTSPSATPVPTATPAGNSATIYYKNTAFSNSYIHYKLDGATAWTTSPGVQMQASTFSGYKAITIPLGSATGLTAAFNNGSGIWDNNGGSNYHFGTGSSSLTGGNLITGEPQADSVTFRVSVPGSTPANAPVYLTGSFNSWNAADPAYLLTRGSDGIYSITLNLPAGSAVTYKLTRGSWATVETASSGADITNRTLTPAGGAQTVTLTVQRWKDQ</sequence>
<feature type="signal peptide" evidence="5">
    <location>
        <begin position="1"/>
        <end position="31"/>
    </location>
</feature>
<feature type="chain" id="PRO_0000432229" description="Alpha-amylase">
    <location>
        <begin position="32"/>
        <end position="1290"/>
    </location>
</feature>
<feature type="domain" description="Fibronectin type-III" evidence="2">
    <location>
        <begin position="817"/>
        <end position="902"/>
    </location>
</feature>
<feature type="domain" description="CBM20" evidence="3">
    <location>
        <begin position="1183"/>
        <end position="1289"/>
    </location>
</feature>
<feature type="region of interest" description="CBM25" evidence="1">
    <location>
        <begin position="902"/>
        <end position="978"/>
    </location>
</feature>
<feature type="region of interest" description="Disordered" evidence="4">
    <location>
        <begin position="994"/>
        <end position="1037"/>
    </location>
</feature>
<feature type="region of interest" description="CBM25" evidence="1">
    <location>
        <begin position="1092"/>
        <end position="1171"/>
    </location>
</feature>
<feature type="compositionally biased region" description="Low complexity" evidence="4">
    <location>
        <begin position="994"/>
        <end position="1008"/>
    </location>
</feature>
<feature type="compositionally biased region" description="Low complexity" evidence="4">
    <location>
        <begin position="1016"/>
        <end position="1031"/>
    </location>
</feature>
<feature type="active site" description="Nucleophile" evidence="8">
    <location>
        <position position="231"/>
    </location>
</feature>
<feature type="active site" description="Proton donor" evidence="8">
    <location>
        <position position="373"/>
    </location>
</feature>
<accession>A0P8X0</accession>
<name>AAMY_NIACI</name>